<proteinExistence type="inferred from homology"/>
<organismHost>
    <name type="scientific">Homo sapiens</name>
    <name type="common">Human</name>
    <dbReference type="NCBI Taxonomy" id="9606"/>
</organismHost>
<gene>
    <name evidence="1" type="primary">NA</name>
</gene>
<feature type="chain" id="PRO_0000078737" description="Neuraminidase">
    <location>
        <begin position="1"/>
        <end position="466"/>
    </location>
</feature>
<feature type="topological domain" description="Intravirion" evidence="1">
    <location>
        <begin position="1"/>
        <end position="8"/>
    </location>
</feature>
<feature type="transmembrane region" description="Helical" evidence="1">
    <location>
        <begin position="9"/>
        <end position="31"/>
    </location>
</feature>
<feature type="topological domain" description="Virion surface" evidence="1">
    <location>
        <begin position="32"/>
        <end position="466"/>
    </location>
</feature>
<feature type="region of interest" description="Involved in apical transport and lipid raft association" evidence="1">
    <location>
        <begin position="13"/>
        <end position="35"/>
    </location>
</feature>
<feature type="region of interest" description="Hypervariable stalk region" evidence="1">
    <location>
        <begin position="38"/>
        <end position="86"/>
    </location>
</feature>
<feature type="region of interest" description="Head of neuraminidase" evidence="1">
    <location>
        <begin position="89"/>
        <end position="466"/>
    </location>
</feature>
<feature type="active site" description="Proton donor/acceptor" evidence="1">
    <location>
        <position position="149"/>
    </location>
</feature>
<feature type="active site" description="Nucleophile" evidence="1">
    <location>
        <position position="409"/>
    </location>
</feature>
<feature type="binding site" evidence="1">
    <location>
        <position position="116"/>
    </location>
    <ligand>
        <name>substrate</name>
    </ligand>
</feature>
<feature type="binding site" evidence="1">
    <location>
        <position position="150"/>
    </location>
    <ligand>
        <name>substrate</name>
    </ligand>
</feature>
<feature type="binding site" evidence="1">
    <location>
        <begin position="275"/>
        <end position="276"/>
    </location>
    <ligand>
        <name>substrate</name>
    </ligand>
</feature>
<feature type="binding site" evidence="1">
    <location>
        <position position="292"/>
    </location>
    <ligand>
        <name>substrate</name>
    </ligand>
</feature>
<feature type="binding site" evidence="1">
    <location>
        <position position="293"/>
    </location>
    <ligand>
        <name>Ca(2+)</name>
        <dbReference type="ChEBI" id="CHEBI:29108"/>
    </ligand>
</feature>
<feature type="binding site" evidence="1">
    <location>
        <position position="324"/>
    </location>
    <ligand>
        <name>Ca(2+)</name>
        <dbReference type="ChEBI" id="CHEBI:29108"/>
    </ligand>
</feature>
<feature type="binding site" evidence="1">
    <location>
        <position position="374"/>
    </location>
    <ligand>
        <name>substrate</name>
    </ligand>
</feature>
<feature type="glycosylation site" description="N-linked (GlcNAc...) asparagine; by host" evidence="1">
    <location>
        <position position="56"/>
    </location>
</feature>
<feature type="glycosylation site" description="N-linked (GlcNAc...) asparagine; by host" evidence="1">
    <location>
        <position position="64"/>
    </location>
</feature>
<feature type="glycosylation site" description="N-linked (GlcNAc...) asparagine; by host" evidence="1">
    <location>
        <position position="144"/>
    </location>
</feature>
<feature type="glycosylation site" description="N-linked (GlcNAc...) asparagine; by host" evidence="1">
    <location>
        <position position="284"/>
    </location>
</feature>
<feature type="disulfide bond" evidence="1">
    <location>
        <begin position="87"/>
        <end position="420"/>
    </location>
</feature>
<feature type="disulfide bond" evidence="1">
    <location>
        <begin position="122"/>
        <end position="127"/>
    </location>
</feature>
<feature type="disulfide bond" evidence="1">
    <location>
        <begin position="182"/>
        <end position="229"/>
    </location>
</feature>
<feature type="disulfide bond" evidence="1">
    <location>
        <begin position="231"/>
        <end position="236"/>
    </location>
</feature>
<feature type="disulfide bond" evidence="1">
    <location>
        <begin position="277"/>
        <end position="291"/>
    </location>
</feature>
<feature type="disulfide bond" evidence="1">
    <location>
        <begin position="279"/>
        <end position="289"/>
    </location>
</feature>
<feature type="disulfide bond" evidence="1">
    <location>
        <begin position="318"/>
        <end position="337"/>
    </location>
</feature>
<feature type="disulfide bond" evidence="1">
    <location>
        <begin position="424"/>
        <end position="447"/>
    </location>
</feature>
<keyword id="KW-0106">Calcium</keyword>
<keyword id="KW-1015">Disulfide bond</keyword>
<keyword id="KW-0325">Glycoprotein</keyword>
<keyword id="KW-0326">Glycosidase</keyword>
<keyword id="KW-1032">Host cell membrane</keyword>
<keyword id="KW-1043">Host membrane</keyword>
<keyword id="KW-0378">Hydrolase</keyword>
<keyword id="KW-0472">Membrane</keyword>
<keyword id="KW-0479">Metal-binding</keyword>
<keyword id="KW-0735">Signal-anchor</keyword>
<keyword id="KW-0812">Transmembrane</keyword>
<keyword id="KW-1133">Transmembrane helix</keyword>
<keyword id="KW-0946">Virion</keyword>
<protein>
    <recommendedName>
        <fullName evidence="1">Neuraminidase</fullName>
        <ecNumber evidence="1">3.2.1.18</ecNumber>
    </recommendedName>
</protein>
<evidence type="ECO:0000255" key="1">
    <source>
        <dbReference type="HAMAP-Rule" id="MF_04071"/>
    </source>
</evidence>
<name>NRAM_INBOR</name>
<dbReference type="EC" id="3.2.1.18" evidence="1"/>
<dbReference type="EMBL" id="M30636">
    <property type="protein sequence ID" value="AAA43741.1"/>
    <property type="molecule type" value="Genomic_RNA"/>
</dbReference>
<dbReference type="PIR" id="F46347">
    <property type="entry name" value="F46347"/>
</dbReference>
<dbReference type="SMR" id="P16201"/>
<dbReference type="CAZy" id="GH34">
    <property type="family name" value="Glycoside Hydrolase Family 34"/>
</dbReference>
<dbReference type="GlyCosmos" id="P16201">
    <property type="glycosylation" value="4 sites, No reported glycans"/>
</dbReference>
<dbReference type="GO" id="GO:0020002">
    <property type="term" value="C:host cell plasma membrane"/>
    <property type="evidence" value="ECO:0007669"/>
    <property type="project" value="UniProtKB-SubCell"/>
</dbReference>
<dbReference type="GO" id="GO:0016020">
    <property type="term" value="C:membrane"/>
    <property type="evidence" value="ECO:0007669"/>
    <property type="project" value="UniProtKB-UniRule"/>
</dbReference>
<dbReference type="GO" id="GO:0055036">
    <property type="term" value="C:virion membrane"/>
    <property type="evidence" value="ECO:0007669"/>
    <property type="project" value="UniProtKB-SubCell"/>
</dbReference>
<dbReference type="GO" id="GO:0004308">
    <property type="term" value="F:exo-alpha-sialidase activity"/>
    <property type="evidence" value="ECO:0007669"/>
    <property type="project" value="UniProtKB-UniRule"/>
</dbReference>
<dbReference type="GO" id="GO:0046872">
    <property type="term" value="F:metal ion binding"/>
    <property type="evidence" value="ECO:0007669"/>
    <property type="project" value="UniProtKB-UniRule"/>
</dbReference>
<dbReference type="GO" id="GO:0005975">
    <property type="term" value="P:carbohydrate metabolic process"/>
    <property type="evidence" value="ECO:0007669"/>
    <property type="project" value="InterPro"/>
</dbReference>
<dbReference type="GO" id="GO:0046761">
    <property type="term" value="P:viral budding from plasma membrane"/>
    <property type="evidence" value="ECO:0007669"/>
    <property type="project" value="UniProtKB-UniRule"/>
</dbReference>
<dbReference type="CDD" id="cd15483">
    <property type="entry name" value="Influenza_NA"/>
    <property type="match status" value="1"/>
</dbReference>
<dbReference type="Gene3D" id="2.120.10.10">
    <property type="match status" value="1"/>
</dbReference>
<dbReference type="HAMAP" id="MF_04071">
    <property type="entry name" value="INFV_NRAM"/>
    <property type="match status" value="1"/>
</dbReference>
<dbReference type="InterPro" id="IPR001860">
    <property type="entry name" value="Glyco_hydro_34"/>
</dbReference>
<dbReference type="InterPro" id="IPR033654">
    <property type="entry name" value="Sialidase_Influenza_A/B"/>
</dbReference>
<dbReference type="InterPro" id="IPR036278">
    <property type="entry name" value="Sialidase_sf"/>
</dbReference>
<dbReference type="Pfam" id="PF00064">
    <property type="entry name" value="Neur"/>
    <property type="match status" value="1"/>
</dbReference>
<dbReference type="SUPFAM" id="SSF50939">
    <property type="entry name" value="Sialidases"/>
    <property type="match status" value="1"/>
</dbReference>
<comment type="function">
    <text evidence="1">Catalyzes the removal of terminal sialic acid residues from viral and cellular glycoconjugates. Cleaves off the terminal sialic acids on the glycosylated HA during virus budding to facilitate virus release. Additionally helps virus spread through the circulation by further removing sialic acids from the cell surface. These cleavages prevent self-aggregation and ensure the efficient spread of the progeny virus from cell to cell. Otherwise, infection would be limited to one round of replication. Described as a receptor-destroying enzyme because it cleaves a terminal sialic acid from the cellular receptors. May facilitate viral invasion of the upper airways by cleaving the sialic acid moieties on the mucin of the airway epithelial cells. Likely to plays a role in the budding process through its association with lipid rafts during intracellular transport. May additionally display a raft-association independent effect on budding. Plays a role in the determination of host range restriction on replication and virulence. Sialidase activity in late endosome/lysosome traffic seems to enhance virus replication.</text>
</comment>
<comment type="catalytic activity">
    <reaction evidence="1">
        <text>Hydrolysis of alpha-(2-&gt;3)-, alpha-(2-&gt;6)-, alpha-(2-&gt;8)- glycosidic linkages of terminal sialic acid residues in oligosaccharides, glycoproteins, glycolipids, colominic acid and synthetic substrates.</text>
        <dbReference type="EC" id="3.2.1.18"/>
    </reaction>
</comment>
<comment type="cofactor">
    <cofactor evidence="1">
        <name>Ca(2+)</name>
        <dbReference type="ChEBI" id="CHEBI:29108"/>
    </cofactor>
</comment>
<comment type="activity regulation">
    <text evidence="1">Inhibited by the neuraminidase inhibitors zanamivir (Relenza) and oseltamivir (Tamiflu). These drugs interfere with the release of progeny virus from infected cells and are effective against all influenza strains. Resistance to neuraminidase inhibitors is quite rare.</text>
</comment>
<comment type="subunit">
    <text evidence="1">Homotetramer.</text>
</comment>
<comment type="subcellular location">
    <subcellularLocation>
        <location evidence="1">Virion membrane</location>
    </subcellularLocation>
    <subcellularLocation>
        <location evidence="1">Host apical cell membrane</location>
        <topology evidence="1">Single-pass type II membrane protein</topology>
    </subcellularLocation>
    <text evidence="1">Preferentially accumulates at the apical plasma membrane in infected polarized epithelial cells, which is the virus assembly site. Uses lipid rafts for cell surface transport and apical sorting. In the virion, forms a mushroom-shaped spike on the surface of the membrane.</text>
</comment>
<comment type="domain">
    <text evidence="1">Intact N-terminus is essential for virion morphogenesis. Possesses two apical sorting signals, one in the ectodomain, which is likely to be a glycan, and the other in the transmembrane domain. The transmembrane domain also plays a role in lipid raft association.</text>
</comment>
<comment type="PTM">
    <text evidence="1">N-glycosylated.</text>
</comment>
<comment type="miscellaneous">
    <text>The influenza B genome consist of 8 RNA segments. Genetic variation of hemagglutinin and/or neuraminidase genes results in the emergence of new influenza strains. The mechanism of variation can be the result of point mutations or the result of genetic reassortment between segments of two different strains.</text>
</comment>
<comment type="similarity">
    <text evidence="1">Belongs to the glycosyl hydrolase 34 family.</text>
</comment>
<accession>P16201</accession>
<organism>
    <name type="scientific">Influenza B virus (strain B/Oregon/5/1980)</name>
    <dbReference type="NCBI Taxonomy" id="11541"/>
    <lineage>
        <taxon>Viruses</taxon>
        <taxon>Riboviria</taxon>
        <taxon>Orthornavirae</taxon>
        <taxon>Negarnaviricota</taxon>
        <taxon>Polyploviricotina</taxon>
        <taxon>Insthoviricetes</taxon>
        <taxon>Articulavirales</taxon>
        <taxon>Orthomyxoviridae</taxon>
        <taxon>Betainfluenzavirus</taxon>
        <taxon>Betainfluenzavirus influenzae</taxon>
        <taxon>Influenza B virus</taxon>
    </lineage>
</organism>
<sequence>MLPSTIQTLTLFLTSGGVLLSLYVSASLSYLLYSDILLKFSTTKITAPTMSLDCANISNVQAVNRSATKEMTFLLPEPEWTYPRLSCQGSTFQKALLISPHRFGEARGNSAPLIIREPFIACGPKECKHFALTHYAAQPGGYYNGTRKDRNKLRHLISVKLGKIPTVENSIFHMAAWSGSACHDGREWTYIGVDGPDSNALIKIKYGEAYTDTYHSYANNILRTQESACNCIGGDCYLMITDGSASGISKCRFLKIREGRIIKEIFPTGRVEHTEECTCGFASNKTIECACRDNSYTAKRPFVKLNVETDTAEIRLMCTETYLDTPRPDDGSITGPCESNGDKGLGGIKGGFVHQRMASKIGRWYSRTMSKTERMGMELYVKYDGDPWTDSDALAPSGVMVSMKEPGWYSFGFEIKDKKCDVPCIGIEMVHDGGKETWHSAATAIYCLMGSGQLLWDTVTGVDMAL</sequence>
<reference key="1">
    <citation type="journal article" date="1990" name="Virology">
        <title>Antigenic, sequence, and crystal variation in influenza B neuraminidase.</title>
        <authorList>
            <person name="Air G.M."/>
            <person name="Laver W.G."/>
            <person name="Luo M."/>
            <person name="Stray S.J."/>
            <person name="Legrone G."/>
            <person name="Webster R.G."/>
        </authorList>
    </citation>
    <scope>NUCLEOTIDE SEQUENCE [GENOMIC RNA]</scope>
</reference>
<reference key="2">
    <citation type="journal article" date="2005" name="N. Engl. J. Med.">
        <title>Neuraminidase inhibitors for influenza.</title>
        <authorList>
            <person name="Moscona A."/>
        </authorList>
    </citation>
    <scope>REVIEW</scope>
</reference>